<gene>
    <name type="primary">DAD1</name>
</gene>
<protein>
    <recommendedName>
        <fullName>Dolichyl-diphosphooligosaccharide--protein glycosyltransferase subunit DAD1</fullName>
        <shortName>Oligosaccharyl transferase subunit DAD1</shortName>
    </recommendedName>
    <alternativeName>
        <fullName>CitDAD-1-1</fullName>
    </alternativeName>
    <alternativeName>
        <fullName>Defender against cell death 1</fullName>
        <shortName>DAD-1</shortName>
    </alternativeName>
</protein>
<proteinExistence type="inferred from homology"/>
<sequence length="115" mass="12547">MARSTGKDAQALFHSLRSAYAATPTTLKIIDLYVGFAVFTALIQVVYMAIVGSFPFNSFLSGVLSCVGTAVLAVCLRIQVNKDNKEFKDLPPERAFADFVLCNLVLHLVIMNFLG</sequence>
<evidence type="ECO:0000250" key="1"/>
<evidence type="ECO:0000250" key="2">
    <source>
        <dbReference type="UniProtKB" id="P46964"/>
    </source>
</evidence>
<evidence type="ECO:0000255" key="3"/>
<evidence type="ECO:0000305" key="4"/>
<feature type="chain" id="PRO_0000124022" description="Dolichyl-diphosphooligosaccharide--protein glycosyltransferase subunit DAD1">
    <location>
        <begin position="1"/>
        <end position="115"/>
    </location>
</feature>
<feature type="topological domain" description="Cytoplasmic" evidence="3">
    <location>
        <begin position="1"/>
        <end position="31"/>
    </location>
</feature>
<feature type="transmembrane region" description="Helical" evidence="3">
    <location>
        <begin position="32"/>
        <end position="52"/>
    </location>
</feature>
<feature type="topological domain" description="Lumenal" evidence="3">
    <location>
        <begin position="53"/>
        <end position="55"/>
    </location>
</feature>
<feature type="transmembrane region" description="Helical" evidence="3">
    <location>
        <begin position="56"/>
        <end position="76"/>
    </location>
</feature>
<feature type="topological domain" description="Cytoplasmic" evidence="3">
    <location>
        <begin position="77"/>
        <end position="94"/>
    </location>
</feature>
<feature type="transmembrane region" description="Helical" evidence="3">
    <location>
        <begin position="95"/>
        <end position="115"/>
    </location>
</feature>
<reference key="1">
    <citation type="journal article" date="2000" name="Biochim. Biophys. Acta">
        <title>Molecular cloning of a homologue of dad-1 gene in citrus: distinctive expression during fruit development.</title>
        <authorList>
            <person name="Moriguchi T."/>
            <person name="Komatsu A."/>
            <person name="Kita M."/>
            <person name="Akimitsu K."/>
            <person name="Endo-Inagaki T."/>
            <person name="Omura M."/>
        </authorList>
    </citation>
    <scope>NUCLEOTIDE SEQUENCE [MRNA]</scope>
    <source>
        <strain>cv. Satsuma Mandarin</strain>
    </source>
</reference>
<organism>
    <name type="scientific">Citrus unshiu</name>
    <name type="common">Satsuma mandarin</name>
    <name type="synonym">Citrus nobilis var. unshiu</name>
    <dbReference type="NCBI Taxonomy" id="55188"/>
    <lineage>
        <taxon>Eukaryota</taxon>
        <taxon>Viridiplantae</taxon>
        <taxon>Streptophyta</taxon>
        <taxon>Embryophyta</taxon>
        <taxon>Tracheophyta</taxon>
        <taxon>Spermatophyta</taxon>
        <taxon>Magnoliopsida</taxon>
        <taxon>eudicotyledons</taxon>
        <taxon>Gunneridae</taxon>
        <taxon>Pentapetalae</taxon>
        <taxon>rosids</taxon>
        <taxon>malvids</taxon>
        <taxon>Sapindales</taxon>
        <taxon>Rutaceae</taxon>
        <taxon>Aurantioideae</taxon>
        <taxon>Citrus</taxon>
    </lineage>
</organism>
<dbReference type="EMBL" id="AB011798">
    <property type="protein sequence ID" value="BAA36555.1"/>
    <property type="molecule type" value="mRNA"/>
</dbReference>
<dbReference type="SMR" id="Q9ZWQ7"/>
<dbReference type="UniPathway" id="UPA00378"/>
<dbReference type="GO" id="GO:0008250">
    <property type="term" value="C:oligosaccharyltransferase complex"/>
    <property type="evidence" value="ECO:0007669"/>
    <property type="project" value="InterPro"/>
</dbReference>
<dbReference type="GO" id="GO:0006487">
    <property type="term" value="P:protein N-linked glycosylation"/>
    <property type="evidence" value="ECO:0007669"/>
    <property type="project" value="TreeGrafter"/>
</dbReference>
<dbReference type="InterPro" id="IPR003038">
    <property type="entry name" value="DAD/Ost2"/>
</dbReference>
<dbReference type="PANTHER" id="PTHR10705">
    <property type="entry name" value="DOLICHYL-DIPHOSPHOOLIGOSACCHARIDE--PROTEIN GLYCOSYLTRANSFERASE SUBUNIT DAD1"/>
    <property type="match status" value="1"/>
</dbReference>
<dbReference type="PANTHER" id="PTHR10705:SF0">
    <property type="entry name" value="DOLICHYL-DIPHOSPHOOLIGOSACCHARIDE--PROTEIN GLYCOSYLTRANSFERASE SUBUNIT DAD1"/>
    <property type="match status" value="1"/>
</dbReference>
<dbReference type="Pfam" id="PF02109">
    <property type="entry name" value="DAD"/>
    <property type="match status" value="1"/>
</dbReference>
<dbReference type="PIRSF" id="PIRSF005588">
    <property type="entry name" value="DAD"/>
    <property type="match status" value="1"/>
</dbReference>
<keyword id="KW-0053">Apoptosis</keyword>
<keyword id="KW-0256">Endoplasmic reticulum</keyword>
<keyword id="KW-0472">Membrane</keyword>
<keyword id="KW-0812">Transmembrane</keyword>
<keyword id="KW-1133">Transmembrane helix</keyword>
<name>DAD1_CITUN</name>
<comment type="function">
    <text evidence="2">Subunit of the oligosaccharyl transferase (OST) complex that catalyzes the initial transfer of a defined glycan (Glc(3)Man(9)GlcNAc(2) in eukaryotes) from the lipid carrier dolichol-pyrophosphate to an asparagine residue within an Asn-X-Ser/Thr consensus motif in nascent polypeptide chains, the first step in protein N-glycosylation. N-glycosylation occurs cotranslationally and the complex associates with the Sec61 complex at the channel-forming translocon complex that mediates protein translocation across the endoplasmic reticulum (ER). All subunits are required for a maximal enzyme activity.</text>
</comment>
<comment type="pathway">
    <text>Protein modification; protein glycosylation.</text>
</comment>
<comment type="subunit">
    <text evidence="2">Component of the oligosaccharyltransferase (OST) complex.</text>
</comment>
<comment type="subcellular location">
    <subcellularLocation>
        <location evidence="1">Endoplasmic reticulum membrane</location>
        <topology evidence="1">Multi-pass membrane protein</topology>
    </subcellularLocation>
</comment>
<comment type="similarity">
    <text evidence="4">Belongs to the DAD/OST2 family.</text>
</comment>
<accession>Q9ZWQ7</accession>